<geneLocation type="plasmid">
    <name>pTrAB3</name>
</geneLocation>
<sequence length="346" mass="36798">MQASMLDSQWRLTIFSPRRKVKVSQMNSRFIAVLLTATILPWVAQAQDSYPSSPVTIMVPAAAGGPSDTVARLVAQSMSKTLGQQVLVENMGGAGGSLGAANVAKADPDGYRLLLYHIGVATFAALYPNLAYKPIEDFSSVGLITEVPMTIVGRKDLEPKTFADLVAIVKKNATTVTFGTAGTGAVSDLCGRLLQDALGTKITLVPYKGMGPAMTDLIGGRIDLACDQTTNTTTQIKANEVHAYAVTTKARIDVLPDVPTVDEGGLKDFELSAWHALWAPKDTPAPIREKLSEALKTALKDPMVIERFASLGTVPVAQDMATPAALDQKFKAEVERLAKVISEAGK</sequence>
<comment type="subcellular location">
    <subcellularLocation>
        <location evidence="2">Periplasm</location>
    </subcellularLocation>
</comment>
<comment type="similarity">
    <text evidence="2">Belongs to the UPF0065 (bug) family.</text>
</comment>
<dbReference type="EMBL" id="U32375">
    <property type="protein sequence ID" value="AAB61627.1"/>
    <property type="molecule type" value="Genomic_DNA"/>
</dbReference>
<dbReference type="SMR" id="P70791"/>
<dbReference type="GO" id="GO:0042597">
    <property type="term" value="C:periplasmic space"/>
    <property type="evidence" value="ECO:0007669"/>
    <property type="project" value="UniProtKB-SubCell"/>
</dbReference>
<dbReference type="CDD" id="cd13576">
    <property type="entry name" value="PBP2_BugD_Asp"/>
    <property type="match status" value="1"/>
</dbReference>
<dbReference type="Gene3D" id="3.40.190.150">
    <property type="entry name" value="Bordetella uptake gene, domain 1"/>
    <property type="match status" value="1"/>
</dbReference>
<dbReference type="Gene3D" id="3.40.190.10">
    <property type="entry name" value="Periplasmic binding protein-like II"/>
    <property type="match status" value="1"/>
</dbReference>
<dbReference type="InterPro" id="IPR005064">
    <property type="entry name" value="BUG"/>
</dbReference>
<dbReference type="InterPro" id="IPR042100">
    <property type="entry name" value="Bug_dom1"/>
</dbReference>
<dbReference type="PANTHER" id="PTHR42928:SF5">
    <property type="entry name" value="BLR1237 PROTEIN"/>
    <property type="match status" value="1"/>
</dbReference>
<dbReference type="PANTHER" id="PTHR42928">
    <property type="entry name" value="TRICARBOXYLATE-BINDING PROTEIN"/>
    <property type="match status" value="1"/>
</dbReference>
<dbReference type="Pfam" id="PF03401">
    <property type="entry name" value="TctC"/>
    <property type="match status" value="1"/>
</dbReference>
<dbReference type="PIRSF" id="PIRSF017082">
    <property type="entry name" value="YflP"/>
    <property type="match status" value="1"/>
</dbReference>
<dbReference type="SUPFAM" id="SSF53850">
    <property type="entry name" value="Periplasmic binding protein-like II"/>
    <property type="match status" value="1"/>
</dbReference>
<protein>
    <recommendedName>
        <fullName>UPF0065 protein in the TAR-I ttuE-ttuC' intergenic region</fullName>
    </recommendedName>
    <alternativeName>
        <fullName>ORFY</fullName>
    </alternativeName>
</protein>
<name>YTUY_AGRVI</name>
<organism>
    <name type="scientific">Agrobacterium vitis</name>
    <name type="common">Rhizobium vitis</name>
    <dbReference type="NCBI Taxonomy" id="373"/>
    <lineage>
        <taxon>Bacteria</taxon>
        <taxon>Pseudomonadati</taxon>
        <taxon>Pseudomonadota</taxon>
        <taxon>Alphaproteobacteria</taxon>
        <taxon>Hyphomicrobiales</taxon>
        <taxon>Rhizobiaceae</taxon>
        <taxon>Rhizobium/Agrobacterium group</taxon>
        <taxon>Agrobacterium</taxon>
    </lineage>
</organism>
<keyword id="KW-0574">Periplasm</keyword>
<keyword id="KW-0614">Plasmid</keyword>
<keyword id="KW-0732">Signal</keyword>
<feature type="signal peptide" evidence="1">
    <location>
        <begin position="1"/>
        <end position="46"/>
    </location>
</feature>
<feature type="chain" id="PRO_0000036197" description="UPF0065 protein in the TAR-I ttuE-ttuC' intergenic region">
    <location>
        <begin position="47"/>
        <end position="346"/>
    </location>
</feature>
<reference key="1">
    <citation type="journal article" date="1996" name="Mol. Plant Microbe Interact.">
        <title>Characterization and distribution of tartrate utilization genes in the grapevine pathogen Agrobacterium vitis.</title>
        <authorList>
            <person name="Salomone J.-Y."/>
            <person name="Crouzet P."/>
            <person name="de Ruffray P."/>
            <person name="Otten L."/>
        </authorList>
    </citation>
    <scope>NUCLEOTIDE SEQUENCE [GENOMIC DNA]</scope>
    <source>
        <strain>AB3</strain>
    </source>
</reference>
<proteinExistence type="inferred from homology"/>
<accession>P70791</accession>
<evidence type="ECO:0000255" key="1"/>
<evidence type="ECO:0000305" key="2"/>